<reference key="1">
    <citation type="journal article" date="1994" name="Cell Growth Differ.">
        <title>Cell cycle-dependent expression of Nek2, a novel human protein kinase related to the NIMA mitotic regulator of Aspergillus nidulans.</title>
        <authorList>
            <person name="Schultz S.J."/>
            <person name="Fry A.M."/>
            <person name="Suetterlin C."/>
            <person name="Ried T."/>
            <person name="Nigg E.A."/>
        </authorList>
    </citation>
    <scope>NUCLEOTIDE SEQUENCE [MRNA] (ISOFORM 1)</scope>
    <source>
        <tissue>Nasopharynx</tissue>
        <tissue>Placenta</tissue>
        <tissue>T-cell</tissue>
    </source>
</reference>
<reference key="2">
    <citation type="journal article" date="2002" name="Biochem. J.">
        <title>Alternative splice variants of the human centrosome kinase Nek2 exhibit distinct patterns of expression in mitosis.</title>
        <authorList>
            <person name="Hames R.S."/>
            <person name="Fry A.M."/>
        </authorList>
    </citation>
    <scope>NUCLEOTIDE SEQUENCE [MRNA] (ISOFORMS 1 AND 2)</scope>
    <scope>FUNCTION</scope>
    <scope>TISSUE SPECIFICITY</scope>
    <scope>SUBCELLULAR LOCATION</scope>
    <scope>DEVELOPMENTAL STAGE</scope>
    <scope>DIMERIZATION</scope>
    <scope>INDUCTION</scope>
</reference>
<reference key="3">
    <citation type="submission" date="1994-07" db="EMBL/GenBank/DDBJ databases">
        <title>Molecular cloning and expression of NLK1, a human NIMA-like kinase.</title>
        <authorList>
            <person name="Lu K.P."/>
            <person name="Hunter T."/>
        </authorList>
    </citation>
    <scope>NUCLEOTIDE SEQUENCE [MRNA] (ISOFORM 1)</scope>
</reference>
<reference key="4">
    <citation type="submission" date="2004-10" db="EMBL/GenBank/DDBJ databases">
        <title>Cloning of human full-length CDSs in BD Creator(TM) system donor vector.</title>
        <authorList>
            <person name="Kalnine N."/>
            <person name="Chen X."/>
            <person name="Rolfs A."/>
            <person name="Halleck A."/>
            <person name="Hines L."/>
            <person name="Eisenstein S."/>
            <person name="Koundinya M."/>
            <person name="Raphael J."/>
            <person name="Moreira D."/>
            <person name="Kelley T."/>
            <person name="LaBaer J."/>
            <person name="Lin Y."/>
            <person name="Phelan M."/>
            <person name="Farmer A."/>
        </authorList>
    </citation>
    <scope>NUCLEOTIDE SEQUENCE [LARGE SCALE MRNA] (ISOFORM 1)</scope>
</reference>
<reference key="5">
    <citation type="submission" date="2005-04" db="EMBL/GenBank/DDBJ databases">
        <authorList>
            <person name="Suzuki Y."/>
            <person name="Sugano S."/>
            <person name="Totoki Y."/>
            <person name="Toyoda A."/>
            <person name="Takeda T."/>
            <person name="Sakaki Y."/>
            <person name="Tanaka A."/>
            <person name="Yokoyama S."/>
        </authorList>
    </citation>
    <scope>NUCLEOTIDE SEQUENCE [LARGE SCALE MRNA] (ISOFORM 1)</scope>
    <scope>VARIANT SER-354</scope>
    <source>
        <tissue>Testis</tissue>
    </source>
</reference>
<reference key="6">
    <citation type="journal article" date="2006" name="Nature">
        <title>The DNA sequence and biological annotation of human chromosome 1.</title>
        <authorList>
            <person name="Gregory S.G."/>
            <person name="Barlow K.F."/>
            <person name="McLay K.E."/>
            <person name="Kaul R."/>
            <person name="Swarbreck D."/>
            <person name="Dunham A."/>
            <person name="Scott C.E."/>
            <person name="Howe K.L."/>
            <person name="Woodfine K."/>
            <person name="Spencer C.C.A."/>
            <person name="Jones M.C."/>
            <person name="Gillson C."/>
            <person name="Searle S."/>
            <person name="Zhou Y."/>
            <person name="Kokocinski F."/>
            <person name="McDonald L."/>
            <person name="Evans R."/>
            <person name="Phillips K."/>
            <person name="Atkinson A."/>
            <person name="Cooper R."/>
            <person name="Jones C."/>
            <person name="Hall R.E."/>
            <person name="Andrews T.D."/>
            <person name="Lloyd C."/>
            <person name="Ainscough R."/>
            <person name="Almeida J.P."/>
            <person name="Ambrose K.D."/>
            <person name="Anderson F."/>
            <person name="Andrew R.W."/>
            <person name="Ashwell R.I.S."/>
            <person name="Aubin K."/>
            <person name="Babbage A.K."/>
            <person name="Bagguley C.L."/>
            <person name="Bailey J."/>
            <person name="Beasley H."/>
            <person name="Bethel G."/>
            <person name="Bird C.P."/>
            <person name="Bray-Allen S."/>
            <person name="Brown J.Y."/>
            <person name="Brown A.J."/>
            <person name="Buckley D."/>
            <person name="Burton J."/>
            <person name="Bye J."/>
            <person name="Carder C."/>
            <person name="Chapman J.C."/>
            <person name="Clark S.Y."/>
            <person name="Clarke G."/>
            <person name="Clee C."/>
            <person name="Cobley V."/>
            <person name="Collier R.E."/>
            <person name="Corby N."/>
            <person name="Coville G.J."/>
            <person name="Davies J."/>
            <person name="Deadman R."/>
            <person name="Dunn M."/>
            <person name="Earthrowl M."/>
            <person name="Ellington A.G."/>
            <person name="Errington H."/>
            <person name="Frankish A."/>
            <person name="Frankland J."/>
            <person name="French L."/>
            <person name="Garner P."/>
            <person name="Garnett J."/>
            <person name="Gay L."/>
            <person name="Ghori M.R.J."/>
            <person name="Gibson R."/>
            <person name="Gilby L.M."/>
            <person name="Gillett W."/>
            <person name="Glithero R.J."/>
            <person name="Grafham D.V."/>
            <person name="Griffiths C."/>
            <person name="Griffiths-Jones S."/>
            <person name="Grocock R."/>
            <person name="Hammond S."/>
            <person name="Harrison E.S.I."/>
            <person name="Hart E."/>
            <person name="Haugen E."/>
            <person name="Heath P.D."/>
            <person name="Holmes S."/>
            <person name="Holt K."/>
            <person name="Howden P.J."/>
            <person name="Hunt A.R."/>
            <person name="Hunt S.E."/>
            <person name="Hunter G."/>
            <person name="Isherwood J."/>
            <person name="James R."/>
            <person name="Johnson C."/>
            <person name="Johnson D."/>
            <person name="Joy A."/>
            <person name="Kay M."/>
            <person name="Kershaw J.K."/>
            <person name="Kibukawa M."/>
            <person name="Kimberley A.M."/>
            <person name="King A."/>
            <person name="Knights A.J."/>
            <person name="Lad H."/>
            <person name="Laird G."/>
            <person name="Lawlor S."/>
            <person name="Leongamornlert D.A."/>
            <person name="Lloyd D.M."/>
            <person name="Loveland J."/>
            <person name="Lovell J."/>
            <person name="Lush M.J."/>
            <person name="Lyne R."/>
            <person name="Martin S."/>
            <person name="Mashreghi-Mohammadi M."/>
            <person name="Matthews L."/>
            <person name="Matthews N.S.W."/>
            <person name="McLaren S."/>
            <person name="Milne S."/>
            <person name="Mistry S."/>
            <person name="Moore M.J.F."/>
            <person name="Nickerson T."/>
            <person name="O'Dell C.N."/>
            <person name="Oliver K."/>
            <person name="Palmeiri A."/>
            <person name="Palmer S.A."/>
            <person name="Parker A."/>
            <person name="Patel D."/>
            <person name="Pearce A.V."/>
            <person name="Peck A.I."/>
            <person name="Pelan S."/>
            <person name="Phelps K."/>
            <person name="Phillimore B.J."/>
            <person name="Plumb R."/>
            <person name="Rajan J."/>
            <person name="Raymond C."/>
            <person name="Rouse G."/>
            <person name="Saenphimmachak C."/>
            <person name="Sehra H.K."/>
            <person name="Sheridan E."/>
            <person name="Shownkeen R."/>
            <person name="Sims S."/>
            <person name="Skuce C.D."/>
            <person name="Smith M."/>
            <person name="Steward C."/>
            <person name="Subramanian S."/>
            <person name="Sycamore N."/>
            <person name="Tracey A."/>
            <person name="Tromans A."/>
            <person name="Van Helmond Z."/>
            <person name="Wall M."/>
            <person name="Wallis J.M."/>
            <person name="White S."/>
            <person name="Whitehead S.L."/>
            <person name="Wilkinson J.E."/>
            <person name="Willey D.L."/>
            <person name="Williams H."/>
            <person name="Wilming L."/>
            <person name="Wray P.W."/>
            <person name="Wu Z."/>
            <person name="Coulson A."/>
            <person name="Vaudin M."/>
            <person name="Sulston J.E."/>
            <person name="Durbin R.M."/>
            <person name="Hubbard T."/>
            <person name="Wooster R."/>
            <person name="Dunham I."/>
            <person name="Carter N.P."/>
            <person name="McVean G."/>
            <person name="Ross M.T."/>
            <person name="Harrow J."/>
            <person name="Olson M.V."/>
            <person name="Beck S."/>
            <person name="Rogers J."/>
            <person name="Bentley D.R."/>
        </authorList>
    </citation>
    <scope>NUCLEOTIDE SEQUENCE [LARGE SCALE GENOMIC DNA]</scope>
</reference>
<reference key="7">
    <citation type="journal article" date="2004" name="Genome Res.">
        <title>The status, quality, and expansion of the NIH full-length cDNA project: the Mammalian Gene Collection (MGC).</title>
        <authorList>
            <consortium name="The MGC Project Team"/>
        </authorList>
    </citation>
    <scope>NUCLEOTIDE SEQUENCE [LARGE SCALE MRNA] (ISOFORMS 1 AND 3)</scope>
    <source>
        <tissue>Mammary gland</tissue>
        <tissue>Skin</tissue>
        <tissue>Uterus</tissue>
    </source>
</reference>
<reference key="8">
    <citation type="journal article" date="1993" name="Cell Growth Differ.">
        <title>Identification of 21 novel human protein kinases, including 3 members of a family related to the cell cycle regulator nimA of Aspergillus nidulans.</title>
        <authorList>
            <person name="Schultz S.J."/>
            <person name="Nigg E.A."/>
        </authorList>
    </citation>
    <scope>NUCLEOTIDE SEQUENCE [MRNA] OF 83-203</scope>
</reference>
<reference key="9">
    <citation type="journal article" date="2004" name="Ann. N. Y. Acad. Sci.">
        <title>Alternatively spliced protein variants as potential therapeutic targets for male infertility and contraception.</title>
        <authorList>
            <person name="Fardilha M."/>
            <person name="Wu W."/>
            <person name="Sa R."/>
            <person name="Fidalgo S."/>
            <person name="Sousa C."/>
            <person name="Mota C."/>
            <person name="da Cruz e Silva O.A."/>
            <person name="da Cruz e Silva E.F."/>
        </authorList>
    </citation>
    <scope>NUCLEOTIDE SEQUENCE [MRNA] OF 216-445 (ISOFORM 4)</scope>
    <scope>INTERACTION WITH PPP1CC</scope>
    <scope>TISSUE SPECIFICITY</scope>
    <source>
        <tissue>Testis</tissue>
    </source>
</reference>
<reference key="10">
    <citation type="journal article" date="2004" name="J. Biol. Chem.">
        <title>NEK2A interacts with MAD1 and possibly functions as a novel integrator of the spindle checkpoint signaling.</title>
        <authorList>
            <person name="Lou Y."/>
            <person name="Yao J."/>
            <person name="Zereshki A."/>
            <person name="Dou Z."/>
            <person name="Ahmed K."/>
            <person name="Wang H."/>
            <person name="Hu J."/>
            <person name="Wang Y."/>
            <person name="Yao X."/>
        </authorList>
    </citation>
    <scope>NUCLEOTIDE SEQUENCE [MRNA] OF 305-445</scope>
    <scope>FUNCTION</scope>
    <scope>SUBCELLULAR LOCATION</scope>
    <scope>INTERACTION WITH MAD1L1</scope>
</reference>
<reference key="11">
    <citation type="journal article" date="2003" name="Mol. Biol. Cell">
        <title>Nek2A kinase stimulates centrosome disjunction and is required for formation of bipolar mitotic spindles.</title>
        <authorList>
            <person name="Faragher A.J."/>
            <person name="Fry A.M."/>
        </authorList>
    </citation>
    <scope>FUNCTION</scope>
    <scope>SUBCELLULAR LOCATION</scope>
</reference>
<reference key="12">
    <citation type="journal article" date="2003" name="Nature">
        <title>Proteomic characterization of the human centrosome by protein correlation profiling.</title>
        <authorList>
            <person name="Andersen J.S."/>
            <person name="Wilkinson C.J."/>
            <person name="Mayor T."/>
            <person name="Mortensen P."/>
            <person name="Nigg E.A."/>
            <person name="Mann M."/>
        </authorList>
    </citation>
    <scope>IDENTIFICATION BY MASS SPECTROMETRY</scope>
    <scope>SUBCELLULAR LOCATION [LARGE SCALE ANALYSIS]</scope>
    <source>
        <tissue>Lymphoblast</tissue>
    </source>
</reference>
<reference key="13">
    <citation type="journal article" date="2004" name="Biochem. Biophys. Res. Commun.">
        <title>Nek2A specifies the centrosomal localization of Erk2.</title>
        <authorList>
            <person name="Lou Y."/>
            <person name="Xie W."/>
            <person name="Zhang D.F."/>
            <person name="Yao J.H."/>
            <person name="Luo Z.F."/>
            <person name="Wang Y.Z."/>
            <person name="Shi Y.Y."/>
            <person name="Yao X.B."/>
        </authorList>
    </citation>
    <scope>FUNCTION</scope>
    <scope>SUBCELLULAR LOCATION</scope>
    <scope>INTERACTION WITH MAPK1</scope>
</reference>
<reference key="14">
    <citation type="journal article" date="2004" name="FEBS Lett.">
        <title>Nek2A kinase regulates the localization of numatrin to centrosome in mitosis.</title>
        <authorList>
            <person name="Yao J."/>
            <person name="Fu C."/>
            <person name="Ding X."/>
            <person name="Guo Z."/>
            <person name="Zenreski A."/>
            <person name="Chen Y."/>
            <person name="Ahmed K."/>
            <person name="Liao J."/>
            <person name="Dou Z."/>
            <person name="Yao X."/>
        </authorList>
    </citation>
    <scope>FUNCTION</scope>
    <scope>SUBCELLULAR LOCATION</scope>
    <scope>INTERACTION WITH NPM1</scope>
</reference>
<reference key="15">
    <citation type="journal article" date="2004" name="J. Biol. Chem.">
        <title>Nucleolar Nek11 is a novel target of Nek2A in G1/S-arrested cells.</title>
        <authorList>
            <person name="Noguchi K."/>
            <person name="Fukazawa H."/>
            <person name="Murakami Y."/>
            <person name="Uehara Y."/>
        </authorList>
    </citation>
    <scope>FUNCTION</scope>
    <scope>SUBCELLULAR LOCATION</scope>
    <scope>ACTIVITY REGULATION</scope>
    <scope>INTERACTION WITH NEK11</scope>
    <scope>MUTAGENESIS OF LYS-37</scope>
</reference>
<reference key="16">
    <citation type="journal article" date="2007" name="Cancer Res.">
        <title>Protein phosphatase-1alpha regulates centrosome splitting through Nek2.</title>
        <authorList>
            <person name="Mi J."/>
            <person name="Guo C."/>
            <person name="Brautigan D.L."/>
            <person name="Larner J.M."/>
        </authorList>
    </citation>
    <scope>FUNCTION</scope>
    <scope>ACTIVITY REGULATION</scope>
    <scope>INTERACTION WITH PPP1CA AND PPP1CC</scope>
</reference>
<reference key="17">
    <citation type="journal article" date="2007" name="Cell Res.">
        <title>Phosphorylation of human Sgo1 by NEK2A is essential for chromosome congression in mitosis.</title>
        <authorList>
            <person name="Fu G."/>
            <person name="Ding X."/>
            <person name="Yuan K."/>
            <person name="Aikhionbare F."/>
            <person name="Yao J."/>
            <person name="Cai X."/>
            <person name="Jiang K."/>
            <person name="Yao X."/>
        </authorList>
    </citation>
    <scope>FUNCTION</scope>
    <scope>SUBCELLULAR LOCATION</scope>
    <scope>INTERACTION WITH SGO1</scope>
</reference>
<reference key="18">
    <citation type="journal article" date="2007" name="J. Biol. Chem.">
        <title>Alternative splicing controls nuclear translocation of the cell cycle-regulated Nek2 kinase.</title>
        <authorList>
            <person name="Wu W."/>
            <person name="Baxter J.E."/>
            <person name="Wattam S.L."/>
            <person name="Hayward D.G."/>
            <person name="Fardilha M."/>
            <person name="Knebel A."/>
            <person name="Ford E.M."/>
            <person name="da Cruz e Silva E.F."/>
            <person name="Fry A.M."/>
        </authorList>
    </citation>
    <scope>ALTERNATIVE SPLICING</scope>
    <scope>FUNCTION</scope>
    <scope>SUBUNIT</scope>
    <scope>SUBCELLULAR LOCATION</scope>
    <scope>AUTOPHOSPHORYLATION</scope>
    <scope>INTERACTION WITH PPP1A</scope>
</reference>
<reference key="19">
    <citation type="journal article" date="2008" name="Genes Dev.">
        <title>beta-Catenin is a Nek2 substrate involved in centrosome separation.</title>
        <authorList>
            <person name="Bahmanyar S."/>
            <person name="Kaplan D.D."/>
            <person name="Deluca J.G."/>
            <person name="Giddings T.H. Jr."/>
            <person name="O'Toole E.T."/>
            <person name="Winey M."/>
            <person name="Salmon E.D."/>
            <person name="Casey P.J."/>
            <person name="Nelson W.J."/>
            <person name="Barth A.I."/>
        </authorList>
    </citation>
    <scope>FUNCTION</scope>
    <scope>INTERACTION WITH CTNB1</scope>
</reference>
<reference key="20">
    <citation type="journal article" date="2008" name="J. Proteome Res.">
        <title>Phosphoproteome of resting human platelets.</title>
        <authorList>
            <person name="Zahedi R.P."/>
            <person name="Lewandrowski U."/>
            <person name="Wiesner J."/>
            <person name="Wortelkamp S."/>
            <person name="Moebius J."/>
            <person name="Schuetz C."/>
            <person name="Walter U."/>
            <person name="Gambaryan S."/>
            <person name="Sickmann A."/>
        </authorList>
    </citation>
    <scope>PHOSPHORYLATION [LARGE SCALE ANALYSIS] AT SER-397</scope>
    <scope>IDENTIFICATION BY MASS SPECTROMETRY [LARGE SCALE ANALYSIS]</scope>
    <source>
        <tissue>Platelet</tissue>
    </source>
</reference>
<reference key="21">
    <citation type="journal article" date="2008" name="Mol. Cell">
        <title>Kinase-selective enrichment enables quantitative phosphoproteomics of the kinome across the cell cycle.</title>
        <authorList>
            <person name="Daub H."/>
            <person name="Olsen J.V."/>
            <person name="Bairlein M."/>
            <person name="Gnad F."/>
            <person name="Oppermann F.S."/>
            <person name="Korner R."/>
            <person name="Greff Z."/>
            <person name="Keri G."/>
            <person name="Stemmann O."/>
            <person name="Mann M."/>
        </authorList>
    </citation>
    <scope>PHOSPHORYLATION [LARGE SCALE ANALYSIS] AT SER-296</scope>
    <scope>IDENTIFICATION BY MASS SPECTROMETRY [LARGE SCALE ANALYSIS]</scope>
    <source>
        <tissue>Cervix carcinoma</tissue>
    </source>
</reference>
<reference key="22">
    <citation type="journal article" date="2008" name="Oncogene">
        <title>The mitotic checkpoint kinase NEK2A regulates kinetochore microtubule attachment stability.</title>
        <authorList>
            <person name="Du J."/>
            <person name="Cai X."/>
            <person name="Yao J."/>
            <person name="Ding X."/>
            <person name="Wu Q."/>
            <person name="Pei S."/>
            <person name="Jiang K."/>
            <person name="Zhang Y."/>
            <person name="Wang W."/>
            <person name="Shi Y."/>
            <person name="Lai Y."/>
            <person name="Shen J."/>
            <person name="Teng M."/>
            <person name="Huang H."/>
            <person name="Fei Q."/>
            <person name="Reddy E.S."/>
            <person name="Zhu J."/>
            <person name="Jin C."/>
            <person name="Yao X."/>
        </authorList>
    </citation>
    <scope>FUNCTION</scope>
    <scope>INTERACTION WITH NDC80</scope>
</reference>
<reference key="23">
    <citation type="journal article" date="2009" name="Mol. Cell">
        <title>An autoinhibitory tyrosine motif in the cell-cycle-regulated Nek7 kinase is released through binding of Nek9.</title>
        <authorList>
            <person name="Richards M.W."/>
            <person name="O'Regan L."/>
            <person name="Mas-Droux C."/>
            <person name="Blot J.M."/>
            <person name="Cheung J."/>
            <person name="Hoelder S."/>
            <person name="Fry A.M."/>
            <person name="Bayliss R."/>
        </authorList>
    </citation>
    <scope>ACTIVITY REGULATION</scope>
</reference>
<reference key="24">
    <citation type="journal article" date="2009" name="Mol. Cell. Proteomics">
        <title>Large-scale proteomics analysis of the human kinome.</title>
        <authorList>
            <person name="Oppermann F.S."/>
            <person name="Gnad F."/>
            <person name="Olsen J.V."/>
            <person name="Hornberger R."/>
            <person name="Greff Z."/>
            <person name="Keri G."/>
            <person name="Mann M."/>
            <person name="Daub H."/>
        </authorList>
    </citation>
    <scope>PHOSPHORYLATION [LARGE SCALE ANALYSIS] AT SER-296</scope>
    <scope>IDENTIFICATION BY MASS SPECTROMETRY [LARGE SCALE ANALYSIS]</scope>
</reference>
<reference key="25">
    <citation type="journal article" date="2010" name="Biochem. Biophys. Res. Commun.">
        <title>Involvement of a centrosomal protein kendrin in the maintenance of centrosome cohesion by modulating Nek2A kinase activity.</title>
        <authorList>
            <person name="Matsuo K."/>
            <person name="Nishimura T."/>
            <person name="Hayakawa A."/>
            <person name="Ono Y."/>
            <person name="Takahashi M."/>
        </authorList>
    </citation>
    <scope>INTERACTION WITH PCNT</scope>
</reference>
<reference key="26">
    <citation type="journal article" date="2010" name="Exp. Mol. Pathol.">
        <title>Nek2 targets the mitotic checkpoint proteins Mad2 and Cdc20: a mechanism for aneuploidy in cancer.</title>
        <authorList>
            <person name="Liu Q."/>
            <person name="Hirohashi Y."/>
            <person name="Du X."/>
            <person name="Greene M.I."/>
            <person name="Wang Q."/>
        </authorList>
    </citation>
    <scope>FUNCTION</scope>
    <scope>SUBCELLULAR LOCATION</scope>
    <scope>INTERACTION WITH MAD2L1 AND CDC20</scope>
</reference>
<reference key="27">
    <citation type="journal article" date="2010" name="Nat. Cell Biol.">
        <title>Components of the Hippo pathway cooperate with Nek2 kinase to regulate centrosome disjunction.</title>
        <authorList>
            <person name="Mardin B.R."/>
            <person name="Lange C."/>
            <person name="Baxter J.E."/>
            <person name="Hardy T."/>
            <person name="Scholz S.R."/>
            <person name="Fry A.M."/>
            <person name="Schiebel E."/>
        </authorList>
    </citation>
    <scope>FUNCTION</scope>
    <scope>SUBCELLULAR LOCATION</scope>
    <scope>INTERACTION WITH STK3/MST2 AND SAV1</scope>
    <scope>PHOSPHORYLATION AT SER-356; SER-365; SER-406 AND SER-438</scope>
</reference>
<reference key="28">
    <citation type="journal article" date="2011" name="J. Biol. Chem.">
        <title>An undecided coiled-coil: the leucine zipper of NEK2 kinase exhibits atypical conformational exchange dynamics.</title>
        <authorList>
            <person name="Croasdale R."/>
            <person name="Ivins F.J."/>
            <person name="Muskett F."/>
            <person name="Daviter T."/>
            <person name="Scott D.J."/>
            <person name="Hardy T."/>
            <person name="Smerdon S.J."/>
            <person name="Fry A.M."/>
            <person name="Pfuhl M."/>
        </authorList>
    </citation>
    <scope>DOMAIN LEUCINE-ZIPPER</scope>
</reference>
<reference key="29">
    <citation type="journal article" date="2005" name="J. Cell Sci.">
        <title>Caught Nek-ing: cilia and centrioles.</title>
        <authorList>
            <person name="Quarmby L.M."/>
            <person name="Mahjoub M.R."/>
        </authorList>
    </citation>
    <scope>REVIEW</scope>
</reference>
<reference key="30">
    <citation type="journal article" date="2013" name="J. Proteome Res.">
        <title>Toward a comprehensive characterization of a human cancer cell phosphoproteome.</title>
        <authorList>
            <person name="Zhou H."/>
            <person name="Di Palma S."/>
            <person name="Preisinger C."/>
            <person name="Peng M."/>
            <person name="Polat A.N."/>
            <person name="Heck A.J."/>
            <person name="Mohammed S."/>
        </authorList>
    </citation>
    <scope>PHOSPHORYLATION [LARGE SCALE ANALYSIS] AT SER-171; SER-184 AND SER-300</scope>
    <scope>IDENTIFICATION BY MASS SPECTROMETRY [LARGE SCALE ANALYSIS]</scope>
    <source>
        <tissue>Cervix carcinoma</tissue>
        <tissue>Erythroleukemia</tissue>
    </source>
</reference>
<reference key="31">
    <citation type="journal article" date="2013" name="Proc. Natl. Acad. Sci. U.S.A.">
        <title>Whole genome sequencing in patients with retinitis pigmentosa reveals pathogenic DNA structural changes and NEK2 as a new disease gene.</title>
        <authorList>
            <person name="Nishiguchi K.M."/>
            <person name="Tearle R.G."/>
            <person name="Liu Y.P."/>
            <person name="Oh E.C."/>
            <person name="Miyake N."/>
            <person name="Benaglio P."/>
            <person name="Harper S."/>
            <person name="Koskiniemi-Kuendig H."/>
            <person name="Venturini G."/>
            <person name="Sharon D."/>
            <person name="Koenekoop R.K."/>
            <person name="Nakamura M."/>
            <person name="Kondo M."/>
            <person name="Ueno S."/>
            <person name="Yasuma T.R."/>
            <person name="Beckmann J.S."/>
            <person name="Ikegawa S."/>
            <person name="Matsumoto N."/>
            <person name="Terasaki H."/>
            <person name="Berson E.L."/>
            <person name="Katsanis N."/>
            <person name="Rivolta C."/>
        </authorList>
    </citation>
    <scope>INVOLVEMENT IN RP67</scope>
</reference>
<reference key="32">
    <citation type="journal article" date="2014" name="J. Cell Sci.">
        <title>Centlein mediates an interaction between C-Nap1 and Cep68 to maintain centrosome cohesion.</title>
        <authorList>
            <person name="Fang G."/>
            <person name="Zhang D."/>
            <person name="Yin H."/>
            <person name="Zheng L."/>
            <person name="Bi X."/>
            <person name="Yuan L."/>
        </authorList>
    </citation>
    <scope>FUNCTION</scope>
    <scope>INTERACTION WITH CNTLN AND CEP68</scope>
</reference>
<reference key="33">
    <citation type="journal article" date="2015" name="Eur. J. Cell Biol.">
        <title>Cep68 can be regulated by Nek2 and SCF complex.</title>
        <authorList>
            <person name="Man X."/>
            <person name="Megraw T.L."/>
            <person name="Lim Y.P."/>
        </authorList>
    </citation>
    <scope>FUNCTION</scope>
</reference>
<reference key="34">
    <citation type="journal article" date="2015" name="J. Cell Sci.">
        <title>Characterization of Cep85 - a new antagonist of Nek2A that is involved in the regulation of centrosome disjunction.</title>
        <authorList>
            <person name="Chen C."/>
            <person name="Tian F."/>
            <person name="Lu L."/>
            <person name="Wang Y."/>
            <person name="Xiao Z."/>
            <person name="Yu C."/>
            <person name="Yu X."/>
        </authorList>
    </citation>
    <scope>FUNCTION</scope>
    <scope>SUBCELLULAR LOCATION</scope>
    <scope>INTERACTION WITH CEP85</scope>
</reference>
<reference key="35">
    <citation type="journal article" date="2015" name="J. Cell Sci.">
        <authorList>
            <person name="Chen C."/>
            <person name="Tian F."/>
            <person name="Lu L."/>
            <person name="Wang Y."/>
            <person name="Xiao Z."/>
            <person name="Yu C."/>
            <person name="Yu X."/>
        </authorList>
    </citation>
    <scope>ERRATUM OF PUBMED:26220856</scope>
</reference>
<reference key="36">
    <citation type="journal article" date="2018" name="J. Cell Sci.">
        <title>CCDC102B functions in centrosome linker assembly and centrosome cohesion.</title>
        <authorList>
            <person name="Xia Y."/>
            <person name="Huang N."/>
            <person name="Chen Z."/>
            <person name="Li F."/>
            <person name="Fan G."/>
            <person name="Ma D."/>
            <person name="Chen J."/>
            <person name="Teng J."/>
        </authorList>
    </citation>
    <scope>FUNCTION</scope>
    <scope>INTERACTION WITH CCDC102B</scope>
    <scope>MUTAGENESIS OF LYS-37</scope>
</reference>
<reference key="37">
    <citation type="journal article" date="2007" name="J. Biol. Chem.">
        <title>Structure and regulation of the human Nek2 centrosomal kinase.</title>
        <authorList>
            <person name="Rellos P."/>
            <person name="Ivins F.J."/>
            <person name="Baxter J.E."/>
            <person name="Pike A."/>
            <person name="Nott T.J."/>
            <person name="Parkinson D.M."/>
            <person name="Das S."/>
            <person name="Howell S."/>
            <person name="Fedorov O."/>
            <person name="Shen Q.Y."/>
            <person name="Fry A.M."/>
            <person name="Knapp S."/>
            <person name="Smerdon S.J."/>
        </authorList>
    </citation>
    <scope>X-RAY CRYSTALLOGRAPHY (2.2 ANGSTROMS) OF 1-271 IN COMPLEX WITH INHIBITOR SU11652</scope>
    <scope>PHOSPHORYLATION AT THR-170; SER-171; THR-175; THR-179; SER-241; SER-356; SER-387; SER-390; SER-397; SER-402 AND SER-428</scope>
    <scope>MUTAGENESIS OF LYS-37; ASP-141; THR-170; SER-171; THR-175; THR-179 AND SER-241</scope>
    <scope>IDENTIFICATION BY MASS SPECTROMETRY</scope>
</reference>
<reference key="38">
    <citation type="journal article" date="2007" name="Nature">
        <title>Patterns of somatic mutation in human cancer genomes.</title>
        <authorList>
            <person name="Greenman C."/>
            <person name="Stephens P."/>
            <person name="Smith R."/>
            <person name="Dalgliesh G.L."/>
            <person name="Hunter C."/>
            <person name="Bignell G."/>
            <person name="Davies H."/>
            <person name="Teague J."/>
            <person name="Butler A."/>
            <person name="Stevens C."/>
            <person name="Edkins S."/>
            <person name="O'Meara S."/>
            <person name="Vastrik I."/>
            <person name="Schmidt E.E."/>
            <person name="Avis T."/>
            <person name="Barthorpe S."/>
            <person name="Bhamra G."/>
            <person name="Buck G."/>
            <person name="Choudhury B."/>
            <person name="Clements J."/>
            <person name="Cole J."/>
            <person name="Dicks E."/>
            <person name="Forbes S."/>
            <person name="Gray K."/>
            <person name="Halliday K."/>
            <person name="Harrison R."/>
            <person name="Hills K."/>
            <person name="Hinton J."/>
            <person name="Jenkinson A."/>
            <person name="Jones D."/>
            <person name="Menzies A."/>
            <person name="Mironenko T."/>
            <person name="Perry J."/>
            <person name="Raine K."/>
            <person name="Richardson D."/>
            <person name="Shepherd R."/>
            <person name="Small A."/>
            <person name="Tofts C."/>
            <person name="Varian J."/>
            <person name="Webb T."/>
            <person name="West S."/>
            <person name="Widaa S."/>
            <person name="Yates A."/>
            <person name="Cahill D.P."/>
            <person name="Louis D.N."/>
            <person name="Goldstraw P."/>
            <person name="Nicholson A.G."/>
            <person name="Brasseur F."/>
            <person name="Looijenga L."/>
            <person name="Weber B.L."/>
            <person name="Chiew Y.-E."/>
            <person name="DeFazio A."/>
            <person name="Greaves M.F."/>
            <person name="Green A.R."/>
            <person name="Campbell P."/>
            <person name="Birney E."/>
            <person name="Easton D.F."/>
            <person name="Chenevix-Trench G."/>
            <person name="Tan M.-H."/>
            <person name="Khoo S.K."/>
            <person name="Teh B.T."/>
            <person name="Yuen S.T."/>
            <person name="Leung S.Y."/>
            <person name="Wooster R."/>
            <person name="Futreal P.A."/>
            <person name="Stratton M.R."/>
        </authorList>
    </citation>
    <scope>VARIANTS [LARGE SCALE ANALYSIS] SER-354 AND TYR-410</scope>
</reference>
<sequence length="445" mass="51763">MPSRAEDYEVLYTIGTGSYGRCQKIRRKSDGKILVWKELDYGSMTEAEKQMLVSEVNLLRELKHPNIVRYYDRIIDRTNTTLYIVMEYCEGGDLASVITKGTKERQYLDEEFVLRVMTQLTLALKECHRRSDGGHTVLHRDLKPANVFLDGKQNVKLGDFGLARILNHDTSFAKTFVGTPYYMSPEQMNRMSYNEKSDIWSLGCLLYELCALMPPFTAFSQKELAGKIREGKFRRIPYRYSDELNEIITRMLNLKDYHRPSVEEILENPLIADLVADEQRRNLERRGRQLGEPEKSQDSSPVLSELKLKEIQLQERERALKAREERLEQKEQELCVRERLAEDKLARAENLLKNYSLLKERKFLSLASNPELLNLPSSVIKKKVHFSGESKENIMRSENSESQLTSKSKCKDLKKRLHAAQLRAQALSDIEKNYQLKSRQILGMR</sequence>
<feature type="chain" id="PRO_0000086421" description="Serine/threonine-protein kinase Nek2">
    <location>
        <begin position="1"/>
        <end position="445"/>
    </location>
</feature>
<feature type="domain" description="Protein kinase" evidence="4">
    <location>
        <begin position="8"/>
        <end position="271"/>
    </location>
</feature>
<feature type="region of interest" description="Interaction with PCNT" evidence="23">
    <location>
        <begin position="264"/>
        <end position="445"/>
    </location>
</feature>
<feature type="region of interest" description="Interaction with CEP85" evidence="29">
    <location>
        <begin position="301"/>
        <end position="445"/>
    </location>
</feature>
<feature type="region of interest" description="Leucine-zipper">
    <location>
        <begin position="306"/>
        <end position="334"/>
    </location>
</feature>
<feature type="region of interest" description="Necessary for interaction with MAD1L1" evidence="9">
    <location>
        <begin position="329"/>
        <end position="445"/>
    </location>
</feature>
<feature type="region of interest" description="Required for microtubule binding and for localization to the centrosomes">
    <location>
        <begin position="333"/>
        <end position="370"/>
    </location>
</feature>
<feature type="region of interest" description="Interaction with SAV1 and STK3/MST2" evidence="24">
    <location>
        <begin position="403"/>
        <end position="439"/>
    </location>
</feature>
<feature type="coiled-coil region" evidence="3">
    <location>
        <begin position="303"/>
        <end position="362"/>
    </location>
</feature>
<feature type="coiled-coil region" evidence="3">
    <location>
        <begin position="406"/>
        <end position="430"/>
    </location>
</feature>
<feature type="active site" description="Proton acceptor" evidence="4 5">
    <location>
        <position position="141"/>
    </location>
</feature>
<feature type="binding site" evidence="4">
    <location>
        <begin position="14"/>
        <end position="22"/>
    </location>
    <ligand>
        <name>ATP</name>
        <dbReference type="ChEBI" id="CHEBI:30616"/>
    </ligand>
</feature>
<feature type="binding site">
    <location>
        <position position="37"/>
    </location>
    <ligand>
        <name>ATP</name>
        <dbReference type="ChEBI" id="CHEBI:30616"/>
    </ligand>
</feature>
<feature type="modified residue" description="Phosphothreonine; by autocatalysis" evidence="36">
    <location>
        <position position="170"/>
    </location>
</feature>
<feature type="modified residue" description="Phosphoserine; by autocatalysis" evidence="36 40">
    <location>
        <position position="171"/>
    </location>
</feature>
<feature type="modified residue" description="Phosphothreonine; by autocatalysis" evidence="14">
    <location>
        <position position="175"/>
    </location>
</feature>
<feature type="modified residue" description="Phosphothreonine; by autocatalysis" evidence="14">
    <location>
        <position position="179"/>
    </location>
</feature>
<feature type="modified residue" description="Phosphoserine" evidence="40">
    <location>
        <position position="184"/>
    </location>
</feature>
<feature type="modified residue" description="Phosphoserine; by autocatalysis" evidence="14">
    <location>
        <position position="241"/>
    </location>
</feature>
<feature type="modified residue" description="Phosphoserine" evidence="38 39">
    <location>
        <position position="296"/>
    </location>
</feature>
<feature type="modified residue" description="Phosphoserine" evidence="40">
    <location>
        <position position="300"/>
    </location>
</feature>
<feature type="modified residue" description="Phosphoserine; by STK3/MST2" evidence="14 24">
    <location>
        <position position="356"/>
    </location>
</feature>
<feature type="modified residue" description="Phosphoserine; by STK3/MST2" evidence="24">
    <location>
        <position position="365"/>
    </location>
</feature>
<feature type="modified residue" description="Phosphoserine" evidence="14">
    <location>
        <position position="387"/>
    </location>
</feature>
<feature type="modified residue" description="Phosphoserine" evidence="14">
    <location>
        <position position="390"/>
    </location>
</feature>
<feature type="modified residue" description="Phosphoserine" evidence="14 37">
    <location>
        <position position="397"/>
    </location>
</feature>
<feature type="modified residue" description="Phosphoserine" evidence="14">
    <location>
        <position position="402"/>
    </location>
</feature>
<feature type="modified residue" description="Phosphoserine; by STK3/MST2" evidence="24">
    <location>
        <position position="406"/>
    </location>
</feature>
<feature type="modified residue" description="Phosphoserine" evidence="14">
    <location>
        <position position="428"/>
    </location>
</feature>
<feature type="modified residue" description="Phosphoserine; by STK3/MST2" evidence="24">
    <location>
        <position position="438"/>
    </location>
</feature>
<feature type="splice variant" id="VSP_015576" description="In isoform 3." evidence="33">
    <original>REER</original>
    <variation>KKKK</variation>
    <location>
        <begin position="323"/>
        <end position="326"/>
    </location>
</feature>
<feature type="splice variant" id="VSP_015577" description="In isoform 3." evidence="33">
    <location>
        <begin position="327"/>
        <end position="445"/>
    </location>
</feature>
<feature type="splice variant" id="VSP_015578" description="In isoform 2." evidence="32">
    <original>ELLNLPSSVIKKKV</original>
    <variation>GMRINLVNRSWCYK</variation>
    <location>
        <begin position="371"/>
        <end position="384"/>
    </location>
</feature>
<feature type="splice variant" id="VSP_041758" description="In isoform 4." evidence="34">
    <location>
        <begin position="371"/>
        <end position="378"/>
    </location>
</feature>
<feature type="splice variant" id="VSP_015579" description="In isoform 2." evidence="32">
    <location>
        <begin position="385"/>
        <end position="445"/>
    </location>
</feature>
<feature type="sequence variant" id="VAR_019990" description="In dbSNP:rs2230489." evidence="16 31">
    <original>N</original>
    <variation>S</variation>
    <location>
        <position position="354"/>
    </location>
</feature>
<feature type="sequence variant" id="VAR_040907" description="In dbSNP:rs56102977." evidence="16">
    <original>C</original>
    <variation>Y</variation>
    <location>
        <position position="410"/>
    </location>
</feature>
<feature type="mutagenesis site" description="Loss of kinase activity and of ability to activate NEK11. Loss of phosphorylation of CCDC102B." evidence="10 14 30">
    <original>K</original>
    <variation>R</variation>
    <location>
        <position position="37"/>
    </location>
</feature>
<feature type="mutagenesis site" description="Loss of autophosphorylation." evidence="14">
    <original>D</original>
    <variation>A</variation>
    <location>
        <position position="141"/>
    </location>
</feature>
<feature type="mutagenesis site" description="No effect on kinase activity." evidence="14">
    <original>T</original>
    <variation>A</variation>
    <location>
        <position position="170"/>
    </location>
</feature>
<feature type="mutagenesis site" description="Kinase activity increased by two fold." evidence="14">
    <original>T</original>
    <variation>E</variation>
    <location>
        <position position="170"/>
    </location>
</feature>
<feature type="mutagenesis site" description="No effect on kinase activity." evidence="14">
    <original>S</original>
    <variation>A</variation>
    <location>
        <position position="171"/>
    </location>
</feature>
<feature type="mutagenesis site" description="Kinase activity increased by two fold." evidence="14">
    <original>S</original>
    <variation>D</variation>
    <location>
        <position position="171"/>
    </location>
</feature>
<feature type="mutagenesis site" description="Kinase activity decreased by two fold." evidence="14">
    <original>T</original>
    <variation>A</variation>
    <location>
        <position position="175"/>
    </location>
</feature>
<feature type="mutagenesis site" description="Kinase activity increased by two fold." evidence="14">
    <original>T</original>
    <variation>E</variation>
    <location>
        <position position="175"/>
    </location>
</feature>
<feature type="mutagenesis site" description="Loss of kinase activity." evidence="14">
    <original>T</original>
    <variation>A</variation>
    <location>
        <position position="179"/>
    </location>
</feature>
<feature type="mutagenesis site" description="Loss of kinase activity." evidence="14">
    <original>T</original>
    <variation>E</variation>
    <location>
        <position position="179"/>
    </location>
</feature>
<feature type="mutagenesis site" description="Loss of kinase activity." evidence="14">
    <original>S</original>
    <variation>A</variation>
    <location>
        <position position="241"/>
    </location>
</feature>
<feature type="mutagenesis site" description="Loss of kinase activity." evidence="14">
    <original>S</original>
    <variation>D</variation>
    <location>
        <position position="241"/>
    </location>
</feature>
<feature type="sequence conflict" description="In Ref. 8; CAA80912." evidence="35" ref="8">
    <original>IV</original>
    <variation>LY</variation>
    <location>
        <begin position="84"/>
        <end position="85"/>
    </location>
</feature>
<feature type="sequence conflict" description="In Ref. 5; BAD97073." evidence="35" ref="5">
    <original>E</original>
    <variation>K</variation>
    <location>
        <position position="325"/>
    </location>
</feature>
<feature type="helix" evidence="41">
    <location>
        <begin position="5"/>
        <end position="7"/>
    </location>
</feature>
<feature type="strand" evidence="41">
    <location>
        <begin position="8"/>
        <end position="16"/>
    </location>
</feature>
<feature type="strand" evidence="41">
    <location>
        <begin position="18"/>
        <end position="27"/>
    </location>
</feature>
<feature type="turn" evidence="41">
    <location>
        <begin position="28"/>
        <end position="30"/>
    </location>
</feature>
<feature type="strand" evidence="41">
    <location>
        <begin position="33"/>
        <end position="40"/>
    </location>
</feature>
<feature type="helix" evidence="43">
    <location>
        <begin position="41"/>
        <end position="43"/>
    </location>
</feature>
<feature type="helix" evidence="41">
    <location>
        <begin position="46"/>
        <end position="61"/>
    </location>
</feature>
<feature type="strand" evidence="41">
    <location>
        <begin position="70"/>
        <end position="76"/>
    </location>
</feature>
<feature type="helix" evidence="41">
    <location>
        <begin position="77"/>
        <end position="79"/>
    </location>
</feature>
<feature type="strand" evidence="41">
    <location>
        <begin position="81"/>
        <end position="87"/>
    </location>
</feature>
<feature type="helix" evidence="41">
    <location>
        <begin position="94"/>
        <end position="103"/>
    </location>
</feature>
<feature type="helix" evidence="41">
    <location>
        <begin position="110"/>
        <end position="130"/>
    </location>
</feature>
<feature type="helix" evidence="41">
    <location>
        <begin position="144"/>
        <end position="146"/>
    </location>
</feature>
<feature type="strand" evidence="41">
    <location>
        <begin position="147"/>
        <end position="149"/>
    </location>
</feature>
<feature type="strand" evidence="41">
    <location>
        <begin position="151"/>
        <end position="153"/>
    </location>
</feature>
<feature type="strand" evidence="41">
    <location>
        <begin position="155"/>
        <end position="157"/>
    </location>
</feature>
<feature type="helix" evidence="41">
    <location>
        <begin position="162"/>
        <end position="165"/>
    </location>
</feature>
<feature type="helix" evidence="41">
    <location>
        <begin position="171"/>
        <end position="177"/>
    </location>
</feature>
<feature type="helix" evidence="42">
    <location>
        <begin position="180"/>
        <end position="182"/>
    </location>
</feature>
<feature type="helix" evidence="41">
    <location>
        <begin position="185"/>
        <end position="189"/>
    </location>
</feature>
<feature type="helix" evidence="41">
    <location>
        <begin position="195"/>
        <end position="211"/>
    </location>
</feature>
<feature type="helix" evidence="41">
    <location>
        <begin position="221"/>
        <end position="230"/>
    </location>
</feature>
<feature type="helix" evidence="41">
    <location>
        <begin position="242"/>
        <end position="251"/>
    </location>
</feature>
<feature type="helix" evidence="41">
    <location>
        <begin position="256"/>
        <end position="258"/>
    </location>
</feature>
<feature type="helix" evidence="41">
    <location>
        <begin position="262"/>
        <end position="266"/>
    </location>
</feature>
<protein>
    <recommendedName>
        <fullName>Serine/threonine-protein kinase Nek2</fullName>
        <ecNumber>2.7.11.1</ecNumber>
    </recommendedName>
    <alternativeName>
        <fullName>HSPK 21</fullName>
    </alternativeName>
    <alternativeName>
        <fullName>Never in mitosis A-related kinase 2</fullName>
        <shortName>NimA-related protein kinase 2</shortName>
    </alternativeName>
    <alternativeName>
        <fullName>NimA-like protein kinase 1</fullName>
    </alternativeName>
</protein>
<organism>
    <name type="scientific">Homo sapiens</name>
    <name type="common">Human</name>
    <dbReference type="NCBI Taxonomy" id="9606"/>
    <lineage>
        <taxon>Eukaryota</taxon>
        <taxon>Metazoa</taxon>
        <taxon>Chordata</taxon>
        <taxon>Craniata</taxon>
        <taxon>Vertebrata</taxon>
        <taxon>Euteleostomi</taxon>
        <taxon>Mammalia</taxon>
        <taxon>Eutheria</taxon>
        <taxon>Euarchontoglires</taxon>
        <taxon>Primates</taxon>
        <taxon>Haplorrhini</taxon>
        <taxon>Catarrhini</taxon>
        <taxon>Hominidae</taxon>
        <taxon>Homo</taxon>
    </lineage>
</organism>
<comment type="function">
    <text evidence="6 7 9 11 12 15 17 18 19 20 22 24 27 28 29 30">Protein kinase which is involved in the control of centrosome separation and bipolar spindle formation in mitotic cells and chromatin condensation in meiotic cells. Regulates centrosome separation (essential for the formation of bipolar spindles and high-fidelity chromosome separation) by phosphorylating centrosomal proteins such as CROCC, CEP250 and NINL, resulting in their displacement from the centrosomes. Regulates kinetochore microtubule attachment stability in mitosis via phosphorylation of NDC80. Involved in regulation of mitotic checkpoint protein complex via phosphorylation of CDC20 and MAD2L1. Plays an active role in chromatin condensation during the first meiotic division through phosphorylation of HMGA2. Phosphorylates: PPP1CC; SGO1; NECAB3 and NPM1. Essential for localization of MAD2L1 to kinetochore and MAPK1 and NPM1 to the centrosome. Phosphorylates CEP68 and CNTLN directly or indirectly (PubMed:24554434). NEK2-mediated phosphorylation of CEP68 promotes CEP68 dissociation from the centrosome and its degradation at the onset of mitosis (PubMed:25704143). Involved in the regulation of centrosome disjunction (PubMed:26220856). Phosphorylates CCDC102B either directly or indirectly which causes CCDC102B to dissociate from the centrosome and allows for centrosome separation (PubMed:30404835).</text>
</comment>
<comment type="function">
    <molecule>Isoform 1</molecule>
    <text evidence="10">Phosphorylates and activates NEK11 in G1/S-arrested cells.</text>
</comment>
<comment type="function">
    <molecule>Isoform 2</molecule>
    <text evidence="10">Not present in the nucleolus and, in contrast to isoform 1, does not phosphorylate and activate NEK11 in G1/S-arrested cells.</text>
</comment>
<comment type="catalytic activity">
    <reaction>
        <text>L-seryl-[protein] + ATP = O-phospho-L-seryl-[protein] + ADP + H(+)</text>
        <dbReference type="Rhea" id="RHEA:17989"/>
        <dbReference type="Rhea" id="RHEA-COMP:9863"/>
        <dbReference type="Rhea" id="RHEA-COMP:11604"/>
        <dbReference type="ChEBI" id="CHEBI:15378"/>
        <dbReference type="ChEBI" id="CHEBI:29999"/>
        <dbReference type="ChEBI" id="CHEBI:30616"/>
        <dbReference type="ChEBI" id="CHEBI:83421"/>
        <dbReference type="ChEBI" id="CHEBI:456216"/>
        <dbReference type="EC" id="2.7.11.1"/>
    </reaction>
</comment>
<comment type="catalytic activity">
    <reaction>
        <text>L-threonyl-[protein] + ATP = O-phospho-L-threonyl-[protein] + ADP + H(+)</text>
        <dbReference type="Rhea" id="RHEA:46608"/>
        <dbReference type="Rhea" id="RHEA-COMP:11060"/>
        <dbReference type="Rhea" id="RHEA-COMP:11605"/>
        <dbReference type="ChEBI" id="CHEBI:15378"/>
        <dbReference type="ChEBI" id="CHEBI:30013"/>
        <dbReference type="ChEBI" id="CHEBI:30616"/>
        <dbReference type="ChEBI" id="CHEBI:61977"/>
        <dbReference type="ChEBI" id="CHEBI:456216"/>
        <dbReference type="EC" id="2.7.11.1"/>
    </reaction>
</comment>
<comment type="cofactor">
    <cofactor>
        <name>Mg(2+)</name>
        <dbReference type="ChEBI" id="CHEBI:18420"/>
    </cofactor>
</comment>
<comment type="activity regulation">
    <text evidence="10 15 21">Isoform 1 is inhibited by ionizing radiation in the presence of PPP1CA. Its catalytic activity is inhibited by the inhibitor CCT241950. In the presence of this inhibitor, displays an autoinhibited conformation: Tyr-70 side chain points into the active site, interacts with the activation loop, and blocks the alphaC helix.</text>
</comment>
<comment type="subunit">
    <text evidence="2 9 10 11 12 13 14 15 17 18 19 20 22 23 24 27 29 30">Isoform 1, isoform 2 and isoform 4 form homo- and heterodimers. Interacts with NECAB3 and HMGA2 (By similarity). Isoform 1 interacts with CDC20, CTNB1, MAD1L1, MAPK, NEK11, NPM1, NDC80, PCNT and SGO1 (PubMed:14978040, PubMed:15161910, PubMed:15358203, PubMed:15388344, PubMed:17621308, PubMed:18086858, PubMed:18297113, PubMed:20034488, PubMed:20599736). Isoform 1 interacts with STK3/MST2 (via SARAH domain) and SAV1 (via SARAH domain) (PubMed:21076410). Isoform 1 and isoform 2 interact with MAD2L1 (PubMed:20034488). Isoform 1 and isoform 4 interact with PPP1CA and PPP1CC (PubMed:15659832, PubMed:17283141). Interacts with CEP68; the interaction leads to phosphorylation of CEP68. Interacts with CNTLN; the interaction leads to phosphorylation of CNTLN (PubMed:24554434). Isoform 1 interacts with CEP85 (PubMed:26220856). Interacts with CCDC102B; the interaction leads to phosphorylation of CCDC102B (PubMed:30404835).</text>
</comment>
<comment type="interaction">
    <interactant intactId="EBI-633182">
        <id>P51955</id>
    </interactant>
    <interactant intactId="EBI-2554854">
        <id>Q9UJX5</id>
        <label>ANAPC4</label>
    </interactant>
    <organismsDiffer>false</organismsDiffer>
    <experiments>7</experiments>
</comment>
<comment type="interaction">
    <interactant intactId="EBI-633182">
        <id>P51955</id>
    </interactant>
    <interactant intactId="EBI-994813">
        <id>P30260</id>
        <label>CDC27</label>
    </interactant>
    <organismsDiffer>false</organismsDiffer>
    <experiments>3</experiments>
</comment>
<comment type="interaction">
    <interactant intactId="EBI-633182">
        <id>P51955</id>
    </interactant>
    <interactant intactId="EBI-2556811">
        <id>Q5T7B8</id>
        <label>KIF24</label>
    </interactant>
    <organismsDiffer>false</organismsDiffer>
    <experiments>7</experiments>
</comment>
<comment type="interaction">
    <interactant intactId="EBI-633182">
        <id>P51955</id>
    </interactant>
    <interactant intactId="EBI-307531">
        <id>P23508</id>
        <label>MCC</label>
    </interactant>
    <organismsDiffer>false</organismsDiffer>
    <experiments>3</experiments>
</comment>
<comment type="interaction">
    <interactant intactId="EBI-633182">
        <id>P51955</id>
    </interactant>
    <interactant intactId="EBI-633195">
        <id>Q8NG66</id>
        <label>NEK11</label>
    </interactant>
    <organismsDiffer>false</organismsDiffer>
    <experiments>5</experiments>
</comment>
<comment type="interaction">
    <interactant intactId="EBI-633182">
        <id>P51955</id>
    </interactant>
    <interactant intactId="EBI-356289">
        <id>P36873-1</id>
        <label>PPP1CC</label>
    </interactant>
    <organismsDiffer>false</organismsDiffer>
    <experiments>2</experiments>
</comment>
<comment type="interaction">
    <interactant intactId="EBI-633182">
        <id>P51955</id>
    </interactant>
    <interactant intactId="EBI-995003">
        <id>Q6GQ04</id>
        <label>MGC80529</label>
    </interactant>
    <organismsDiffer>true</organismsDiffer>
    <experiments>2</experiments>
</comment>
<comment type="interaction">
    <interactant intactId="EBI-687792">
        <id>P51955-1</id>
    </interactant>
    <interactant intactId="EBI-633195">
        <id>Q8NG66</id>
        <label>NEK11</label>
    </interactant>
    <organismsDiffer>false</organismsDiffer>
    <experiments>2</experiments>
</comment>
<comment type="subcellular location">
    <molecule>Isoform 1</molecule>
    <subcellularLocation>
        <location>Nucleus</location>
    </subcellularLocation>
    <subcellularLocation>
        <location evidence="10">Nucleus</location>
        <location evidence="10">Nucleolus</location>
    </subcellularLocation>
    <subcellularLocation>
        <location>Cytoplasm</location>
    </subcellularLocation>
    <subcellularLocation>
        <location evidence="8 29">Cytoplasm</location>
        <location evidence="8 29">Cytoskeleton</location>
        <location evidence="8 29">Microtubule organizing center</location>
        <location evidence="8 29">Centrosome</location>
    </subcellularLocation>
    <subcellularLocation>
        <location>Cytoplasm</location>
        <location>Cytoskeleton</location>
        <location>Spindle pole</location>
    </subcellularLocation>
    <subcellularLocation>
        <location>Chromosome</location>
        <location>Centromere</location>
        <location>Kinetochore</location>
    </subcellularLocation>
    <subcellularLocation>
        <location evidence="1">Chromosome</location>
        <location evidence="1">Centromere</location>
    </subcellularLocation>
    <text>STK3/MST2 and SAV1 are required for its targeting to the centrosome. Colocalizes with SGO1 and MAD1L1 at the kinetochore. Not associated with kinetochore in the interphase but becomes associated with it upon the breakdown of the nuclear envelope. Has a nucleolar targeting/ retention activity via a coiled-coil domain at the C-terminal end.</text>
</comment>
<comment type="subcellular location">
    <molecule>Isoform 2</molecule>
    <subcellularLocation>
        <location>Cytoplasm</location>
    </subcellularLocation>
    <text>Predominantly cytoplasmic.</text>
</comment>
<comment type="subcellular location">
    <molecule>Isoform 4</molecule>
    <subcellularLocation>
        <location>Nucleus</location>
    </subcellularLocation>
    <subcellularLocation>
        <location>Cytoplasm</location>
        <location>Cytoskeleton</location>
        <location>Microtubule organizing center</location>
        <location>Centrosome</location>
    </subcellularLocation>
    <text>Predominantly nuclear.</text>
</comment>
<comment type="alternative products">
    <event type="alternative splicing"/>
    <isoform>
        <id>P51955-1</id>
        <name>1</name>
        <name>Nek2A</name>
        <sequence type="displayed"/>
    </isoform>
    <isoform>
        <id>P51955-2</id>
        <name>2</name>
        <name>Nek2B</name>
        <sequence type="described" ref="VSP_015578 VSP_015579"/>
    </isoform>
    <isoform>
        <id>P51955-3</id>
        <name>3</name>
        <sequence type="described" ref="VSP_015576 VSP_015577"/>
    </isoform>
    <isoform>
        <id>P51955-4</id>
        <name>4</name>
        <name>Nek2C</name>
        <name>Nek2A-T</name>
        <sequence type="described" ref="VSP_041758"/>
    </isoform>
</comment>
<comment type="tissue specificity">
    <text evidence="6 13">Isoform 1 and isoform 2 are expressed in peripheral blood T-cells and a wide variety of transformed cell types. Isoform 1 and isoform 4 are expressed in the testis. Up-regulated in various cancer cell lines, as well as primary breast tumors.</text>
</comment>
<comment type="induction">
    <text evidence="6 29">Expression and activity peak in the G2 phase of the mitotic cycle and decrease once the cells have entered mitosis due to degradation by the anaphase promoting complex APC/C-CDC20. In G1 phase, both isoform 1 and isoform 2 are almost undetectable. However, at the G1/S transition, there is an increase in expression of both isoforms which then remain at this increased level throughout S and G2. At the onset of mitosis, isoform 1 undergoes a rapid disappearance whereas isoform 2 continues to be present at about the same level as in G2. During the rest of mitosis, isoform 1 remains absent, while isoform 2 only begins to decline upon re-entry into the next G1 phase.</text>
</comment>
<comment type="domain">
    <text evidence="25">The leucine-zipper domain is required for its dimerization and activation.</text>
</comment>
<comment type="PTM">
    <text evidence="14 24">Activated by autophosphorylation. Protein phosphatase 1 represses autophosphorylation and activation of isoform 1 by dephosphorylation. Phosphorylation by STK3/MST2 is necessary for its localization to the centrosome.</text>
</comment>
<comment type="disease" evidence="26">
    <disease id="DI-03990">
        <name>Retinitis pigmentosa 67</name>
        <acronym>RP67</acronym>
        <description>A retinal dystrophy belonging to the group of pigmentary retinopathies. Retinitis pigmentosa is characterized by retinal pigment deposits visible on fundus examination and primary loss of rod photoreceptor cells followed by secondary loss of cone photoreceptors. Patients typically have night vision blindness and loss of midperipheral visual field. As their condition progresses, they lose their far peripheral visual field and eventually central vision as well.</description>
        <dbReference type="MIM" id="615565"/>
    </disease>
    <text>The disease is caused by variants affecting the gene represented in this entry.</text>
</comment>
<comment type="similarity">
    <text evidence="35">Belongs to the protein kinase superfamily. NEK Ser/Thr protein kinase family. NIMA subfamily.</text>
</comment>
<comment type="sequence caution" evidence="35">
    <conflict type="frameshift">
        <sequence resource="EMBL-CDS" id="AAH65932"/>
    </conflict>
</comment>
<evidence type="ECO:0000250" key="1"/>
<evidence type="ECO:0000250" key="2">
    <source>
        <dbReference type="UniProtKB" id="O35942"/>
    </source>
</evidence>
<evidence type="ECO:0000255" key="3"/>
<evidence type="ECO:0000255" key="4">
    <source>
        <dbReference type="PROSITE-ProRule" id="PRU00159"/>
    </source>
</evidence>
<evidence type="ECO:0000255" key="5">
    <source>
        <dbReference type="PROSITE-ProRule" id="PRU10027"/>
    </source>
</evidence>
<evidence type="ECO:0000269" key="6">
    <source>
    </source>
</evidence>
<evidence type="ECO:0000269" key="7">
    <source>
    </source>
</evidence>
<evidence type="ECO:0000269" key="8">
    <source>
    </source>
</evidence>
<evidence type="ECO:0000269" key="9">
    <source>
    </source>
</evidence>
<evidence type="ECO:0000269" key="10">
    <source>
    </source>
</evidence>
<evidence type="ECO:0000269" key="11">
    <source>
    </source>
</evidence>
<evidence type="ECO:0000269" key="12">
    <source>
    </source>
</evidence>
<evidence type="ECO:0000269" key="13">
    <source>
    </source>
</evidence>
<evidence type="ECO:0000269" key="14">
    <source>
    </source>
</evidence>
<evidence type="ECO:0000269" key="15">
    <source>
    </source>
</evidence>
<evidence type="ECO:0000269" key="16">
    <source>
    </source>
</evidence>
<evidence type="ECO:0000269" key="17">
    <source>
    </source>
</evidence>
<evidence type="ECO:0000269" key="18">
    <source>
    </source>
</evidence>
<evidence type="ECO:0000269" key="19">
    <source>
    </source>
</evidence>
<evidence type="ECO:0000269" key="20">
    <source>
    </source>
</evidence>
<evidence type="ECO:0000269" key="21">
    <source>
    </source>
</evidence>
<evidence type="ECO:0000269" key="22">
    <source>
    </source>
</evidence>
<evidence type="ECO:0000269" key="23">
    <source>
    </source>
</evidence>
<evidence type="ECO:0000269" key="24">
    <source>
    </source>
</evidence>
<evidence type="ECO:0000269" key="25">
    <source>
    </source>
</evidence>
<evidence type="ECO:0000269" key="26">
    <source>
    </source>
</evidence>
<evidence type="ECO:0000269" key="27">
    <source>
    </source>
</evidence>
<evidence type="ECO:0000269" key="28">
    <source>
    </source>
</evidence>
<evidence type="ECO:0000269" key="29">
    <source>
    </source>
</evidence>
<evidence type="ECO:0000269" key="30">
    <source>
    </source>
</evidence>
<evidence type="ECO:0000269" key="31">
    <source ref="5"/>
</evidence>
<evidence type="ECO:0000303" key="32">
    <source>
    </source>
</evidence>
<evidence type="ECO:0000303" key="33">
    <source>
    </source>
</evidence>
<evidence type="ECO:0000303" key="34">
    <source>
    </source>
</evidence>
<evidence type="ECO:0000305" key="35"/>
<evidence type="ECO:0000305" key="36">
    <source>
    </source>
</evidence>
<evidence type="ECO:0007744" key="37">
    <source>
    </source>
</evidence>
<evidence type="ECO:0007744" key="38">
    <source>
    </source>
</evidence>
<evidence type="ECO:0007744" key="39">
    <source>
    </source>
</evidence>
<evidence type="ECO:0007744" key="40">
    <source>
    </source>
</evidence>
<evidence type="ECO:0007829" key="41">
    <source>
        <dbReference type="PDB" id="2W5A"/>
    </source>
</evidence>
<evidence type="ECO:0007829" key="42">
    <source>
        <dbReference type="PDB" id="5M53"/>
    </source>
</evidence>
<evidence type="ECO:0007829" key="43">
    <source>
        <dbReference type="PDB" id="6SGK"/>
    </source>
</evidence>
<gene>
    <name type="primary">NEK2</name>
    <name type="synonym">NEK2A</name>
    <name type="synonym">NLK1</name>
</gene>
<keyword id="KW-0002">3D-structure</keyword>
<keyword id="KW-0025">Alternative splicing</keyword>
<keyword id="KW-0067">ATP-binding</keyword>
<keyword id="KW-0131">Cell cycle</keyword>
<keyword id="KW-0132">Cell division</keyword>
<keyword id="KW-0137">Centromere</keyword>
<keyword id="KW-0158">Chromosome</keyword>
<keyword id="KW-0159">Chromosome partition</keyword>
<keyword id="KW-0175">Coiled coil</keyword>
<keyword id="KW-0963">Cytoplasm</keyword>
<keyword id="KW-0206">Cytoskeleton</keyword>
<keyword id="KW-0418">Kinase</keyword>
<keyword id="KW-0995">Kinetochore</keyword>
<keyword id="KW-0460">Magnesium</keyword>
<keyword id="KW-0469">Meiosis</keyword>
<keyword id="KW-0479">Metal-binding</keyword>
<keyword id="KW-0493">Microtubule</keyword>
<keyword id="KW-0498">Mitosis</keyword>
<keyword id="KW-0547">Nucleotide-binding</keyword>
<keyword id="KW-0539">Nucleus</keyword>
<keyword id="KW-0597">Phosphoprotein</keyword>
<keyword id="KW-1267">Proteomics identification</keyword>
<keyword id="KW-1185">Reference proteome</keyword>
<keyword id="KW-0682">Retinitis pigmentosa</keyword>
<keyword id="KW-0723">Serine/threonine-protein kinase</keyword>
<keyword id="KW-0808">Transferase</keyword>
<proteinExistence type="evidence at protein level"/>
<accession>P51955</accession>
<accession>Q53FD6</accession>
<accession>Q5I1Z9</accession>
<accession>Q5VXZ1</accession>
<accession>Q6NZX8</accession>
<accession>Q7Z634</accession>
<accession>Q86XH2</accession>
<accession>Q96QN9</accession>
<name>NEK2_HUMAN</name>
<dbReference type="EC" id="2.7.11.1"/>
<dbReference type="EMBL" id="Z29066">
    <property type="protein sequence ID" value="CAA82309.1"/>
    <property type="molecule type" value="mRNA"/>
</dbReference>
<dbReference type="EMBL" id="AY045701">
    <property type="protein sequence ID" value="AAK92212.1"/>
    <property type="molecule type" value="mRNA"/>
</dbReference>
<dbReference type="EMBL" id="U11050">
    <property type="protein sequence ID" value="AAA19558.1"/>
    <property type="molecule type" value="mRNA"/>
</dbReference>
<dbReference type="EMBL" id="BT019729">
    <property type="protein sequence ID" value="AAV38534.1"/>
    <property type="molecule type" value="mRNA"/>
</dbReference>
<dbReference type="EMBL" id="AK223353">
    <property type="protein sequence ID" value="BAD97073.1"/>
    <property type="molecule type" value="mRNA"/>
</dbReference>
<dbReference type="EMBL" id="AC096637">
    <property type="status" value="NOT_ANNOTATED_CDS"/>
    <property type="molecule type" value="Genomic_DNA"/>
</dbReference>
<dbReference type="EMBL" id="AL356310">
    <property type="status" value="NOT_ANNOTATED_CDS"/>
    <property type="molecule type" value="Genomic_DNA"/>
</dbReference>
<dbReference type="EMBL" id="BC043502">
    <property type="protein sequence ID" value="AAH43502.2"/>
    <property type="molecule type" value="mRNA"/>
</dbReference>
<dbReference type="EMBL" id="BC052807">
    <property type="protein sequence ID" value="AAH52807.1"/>
    <property type="molecule type" value="mRNA"/>
</dbReference>
<dbReference type="EMBL" id="BC065932">
    <property type="protein sequence ID" value="AAH65932.1"/>
    <property type="status" value="ALT_FRAME"/>
    <property type="molecule type" value="mRNA"/>
</dbReference>
<dbReference type="EMBL" id="Z25425">
    <property type="protein sequence ID" value="CAA80912.1"/>
    <property type="molecule type" value="mRNA"/>
</dbReference>
<dbReference type="EMBL" id="AY863109">
    <property type="protein sequence ID" value="AAW56418.1"/>
    <property type="molecule type" value="mRNA"/>
</dbReference>
<dbReference type="CCDS" id="CCDS1500.1">
    <molecule id="P51955-1"/>
</dbReference>
<dbReference type="CCDS" id="CCDS55682.1">
    <molecule id="P51955-2"/>
</dbReference>
<dbReference type="PIR" id="G01452">
    <property type="entry name" value="G01452"/>
</dbReference>
<dbReference type="PIR" id="I38215">
    <property type="entry name" value="I38215"/>
</dbReference>
<dbReference type="RefSeq" id="NP_001191111.1">
    <property type="nucleotide sequence ID" value="NM_001204182.1"/>
</dbReference>
<dbReference type="RefSeq" id="NP_001191112.1">
    <molecule id="P51955-2"/>
    <property type="nucleotide sequence ID" value="NM_001204183.2"/>
</dbReference>
<dbReference type="RefSeq" id="NP_002488.1">
    <molecule id="P51955-1"/>
    <property type="nucleotide sequence ID" value="NM_002497.4"/>
</dbReference>
<dbReference type="RefSeq" id="XP_005273204.1">
    <property type="nucleotide sequence ID" value="XM_005273147.1"/>
</dbReference>
<dbReference type="PDB" id="2JAV">
    <property type="method" value="X-ray"/>
    <property type="resolution" value="2.20 A"/>
    <property type="chains" value="A=1-271"/>
</dbReference>
<dbReference type="PDB" id="2W5A">
    <property type="method" value="X-ray"/>
    <property type="resolution" value="1.55 A"/>
    <property type="chains" value="A=1-271"/>
</dbReference>
<dbReference type="PDB" id="2W5B">
    <property type="method" value="X-ray"/>
    <property type="resolution" value="2.40 A"/>
    <property type="chains" value="A=1-271"/>
</dbReference>
<dbReference type="PDB" id="2W5H">
    <property type="method" value="X-ray"/>
    <property type="resolution" value="2.33 A"/>
    <property type="chains" value="A=1-271"/>
</dbReference>
<dbReference type="PDB" id="2WQO">
    <property type="method" value="X-ray"/>
    <property type="resolution" value="2.17 A"/>
    <property type="chains" value="A=1-271"/>
</dbReference>
<dbReference type="PDB" id="2XK3">
    <property type="method" value="X-ray"/>
    <property type="resolution" value="2.20 A"/>
    <property type="chains" value="A=1-271"/>
</dbReference>
<dbReference type="PDB" id="2XK4">
    <property type="method" value="X-ray"/>
    <property type="resolution" value="2.10 A"/>
    <property type="chains" value="A=1-271"/>
</dbReference>
<dbReference type="PDB" id="2XK6">
    <property type="method" value="X-ray"/>
    <property type="resolution" value="2.20 A"/>
    <property type="chains" value="A=1-271"/>
</dbReference>
<dbReference type="PDB" id="2XK7">
    <property type="method" value="X-ray"/>
    <property type="resolution" value="1.99 A"/>
    <property type="chains" value="A=1-271"/>
</dbReference>
<dbReference type="PDB" id="2XK8">
    <property type="method" value="X-ray"/>
    <property type="resolution" value="2.00 A"/>
    <property type="chains" value="A=1-271"/>
</dbReference>
<dbReference type="PDB" id="2XKC">
    <property type="method" value="X-ray"/>
    <property type="resolution" value="2.50 A"/>
    <property type="chains" value="A=1-271"/>
</dbReference>
<dbReference type="PDB" id="2XKD">
    <property type="method" value="X-ray"/>
    <property type="resolution" value="1.96 A"/>
    <property type="chains" value="A=1-271"/>
</dbReference>
<dbReference type="PDB" id="2XKE">
    <property type="method" value="X-ray"/>
    <property type="resolution" value="2.20 A"/>
    <property type="chains" value="A=1-271"/>
</dbReference>
<dbReference type="PDB" id="2XKF">
    <property type="method" value="X-ray"/>
    <property type="resolution" value="2.35 A"/>
    <property type="chains" value="A=1-271"/>
</dbReference>
<dbReference type="PDB" id="2XNM">
    <property type="method" value="X-ray"/>
    <property type="resolution" value="1.85 A"/>
    <property type="chains" value="A=1-271"/>
</dbReference>
<dbReference type="PDB" id="2XNN">
    <property type="method" value="X-ray"/>
    <property type="resolution" value="2.50 A"/>
    <property type="chains" value="A=1-271"/>
</dbReference>
<dbReference type="PDB" id="2XNO">
    <property type="method" value="X-ray"/>
    <property type="resolution" value="1.98 A"/>
    <property type="chains" value="A=1-271"/>
</dbReference>
<dbReference type="PDB" id="2XNP">
    <property type="method" value="X-ray"/>
    <property type="resolution" value="1.98 A"/>
    <property type="chains" value="A=1-271"/>
</dbReference>
<dbReference type="PDB" id="4A4X">
    <property type="method" value="X-ray"/>
    <property type="resolution" value="2.40 A"/>
    <property type="chains" value="A=1-271"/>
</dbReference>
<dbReference type="PDB" id="4AFE">
    <property type="method" value="X-ray"/>
    <property type="resolution" value="2.60 A"/>
    <property type="chains" value="A=1-271"/>
</dbReference>
<dbReference type="PDB" id="5M51">
    <property type="method" value="X-ray"/>
    <property type="resolution" value="1.90 A"/>
    <property type="chains" value="A=1-271"/>
</dbReference>
<dbReference type="PDB" id="5M53">
    <property type="method" value="X-ray"/>
    <property type="resolution" value="1.90 A"/>
    <property type="chains" value="A=1-271"/>
</dbReference>
<dbReference type="PDB" id="5M55">
    <property type="method" value="X-ray"/>
    <property type="resolution" value="2.40 A"/>
    <property type="chains" value="A=1-271"/>
</dbReference>
<dbReference type="PDB" id="5M57">
    <property type="method" value="X-ray"/>
    <property type="resolution" value="2.30 A"/>
    <property type="chains" value="A=1-271"/>
</dbReference>
<dbReference type="PDB" id="6SGD">
    <property type="method" value="X-ray"/>
    <property type="resolution" value="2.00 A"/>
    <property type="chains" value="A=1-271"/>
</dbReference>
<dbReference type="PDB" id="6SGH">
    <property type="method" value="X-ray"/>
    <property type="resolution" value="3.00 A"/>
    <property type="chains" value="A=1-271"/>
</dbReference>
<dbReference type="PDB" id="6SGI">
    <property type="method" value="X-ray"/>
    <property type="resolution" value="2.30 A"/>
    <property type="chains" value="A=1-271"/>
</dbReference>
<dbReference type="PDB" id="6SGK">
    <property type="method" value="X-ray"/>
    <property type="resolution" value="2.00 A"/>
    <property type="chains" value="A=1-271"/>
</dbReference>
<dbReference type="PDB" id="6SK9">
    <property type="method" value="X-ray"/>
    <property type="resolution" value="2.00 A"/>
    <property type="chains" value="A=1-271"/>
</dbReference>
<dbReference type="PDB" id="6TM5">
    <property type="method" value="EM"/>
    <property type="resolution" value="3.90 A"/>
    <property type="chains" value="Q/S=1-445"/>
</dbReference>
<dbReference type="PDBsum" id="2JAV"/>
<dbReference type="PDBsum" id="2W5A"/>
<dbReference type="PDBsum" id="2W5B"/>
<dbReference type="PDBsum" id="2W5H"/>
<dbReference type="PDBsum" id="2WQO"/>
<dbReference type="PDBsum" id="2XK3"/>
<dbReference type="PDBsum" id="2XK4"/>
<dbReference type="PDBsum" id="2XK6"/>
<dbReference type="PDBsum" id="2XK7"/>
<dbReference type="PDBsum" id="2XK8"/>
<dbReference type="PDBsum" id="2XKC"/>
<dbReference type="PDBsum" id="2XKD"/>
<dbReference type="PDBsum" id="2XKE"/>
<dbReference type="PDBsum" id="2XKF"/>
<dbReference type="PDBsum" id="2XNM"/>
<dbReference type="PDBsum" id="2XNN"/>
<dbReference type="PDBsum" id="2XNO"/>
<dbReference type="PDBsum" id="2XNP"/>
<dbReference type="PDBsum" id="4A4X"/>
<dbReference type="PDBsum" id="4AFE"/>
<dbReference type="PDBsum" id="5M51"/>
<dbReference type="PDBsum" id="5M53"/>
<dbReference type="PDBsum" id="5M55"/>
<dbReference type="PDBsum" id="5M57"/>
<dbReference type="PDBsum" id="6SGD"/>
<dbReference type="PDBsum" id="6SGH"/>
<dbReference type="PDBsum" id="6SGI"/>
<dbReference type="PDBsum" id="6SGK"/>
<dbReference type="PDBsum" id="6SK9"/>
<dbReference type="PDBsum" id="6TM5"/>
<dbReference type="EMDB" id="EMD-10518"/>
<dbReference type="SMR" id="P51955"/>
<dbReference type="BioGRID" id="110826">
    <property type="interactions" value="136"/>
</dbReference>
<dbReference type="CORUM" id="P51955"/>
<dbReference type="FunCoup" id="P51955">
    <property type="interactions" value="2004"/>
</dbReference>
<dbReference type="IntAct" id="P51955">
    <property type="interactions" value="52"/>
</dbReference>
<dbReference type="MINT" id="P51955"/>
<dbReference type="STRING" id="9606.ENSP00000355966"/>
<dbReference type="BindingDB" id="P51955"/>
<dbReference type="ChEMBL" id="CHEMBL3835"/>
<dbReference type="DrugBank" id="DB07180">
    <property type="generic name" value="5-[(Z)-(5-Chloro-2-oxo-1,2-dihydro-3H-indol-3-ylidene)methyl]-N,2,4-trimethyl-1H-pyrrole-3-carboxamide"/>
</dbReference>
<dbReference type="DrugBank" id="DB12010">
    <property type="generic name" value="Fostamatinib"/>
</dbReference>
<dbReference type="DrugCentral" id="P51955"/>
<dbReference type="GuidetoPHARMACOLOGY" id="2117"/>
<dbReference type="iPTMnet" id="P51955"/>
<dbReference type="PhosphoSitePlus" id="P51955"/>
<dbReference type="BioMuta" id="NEK2"/>
<dbReference type="DMDM" id="1709252"/>
<dbReference type="CPTAC" id="CPTAC-1258"/>
<dbReference type="CPTAC" id="CPTAC-1259"/>
<dbReference type="CPTAC" id="CPTAC-2903"/>
<dbReference type="CPTAC" id="CPTAC-2904"/>
<dbReference type="jPOST" id="P51955"/>
<dbReference type="MassIVE" id="P51955"/>
<dbReference type="PaxDb" id="9606-ENSP00000355966"/>
<dbReference type="PeptideAtlas" id="P51955"/>
<dbReference type="ProteomicsDB" id="56453">
    <molecule id="P51955-1"/>
</dbReference>
<dbReference type="ProteomicsDB" id="56454">
    <molecule id="P51955-2"/>
</dbReference>
<dbReference type="ProteomicsDB" id="56455">
    <molecule id="P51955-3"/>
</dbReference>
<dbReference type="ProteomicsDB" id="56456">
    <molecule id="P51955-4"/>
</dbReference>
<dbReference type="Pumba" id="P51955"/>
<dbReference type="Antibodypedia" id="4308">
    <property type="antibodies" value="468 antibodies from 38 providers"/>
</dbReference>
<dbReference type="DNASU" id="4751"/>
<dbReference type="Ensembl" id="ENST00000366998.4">
    <molecule id="P51955-2"/>
    <property type="protein sequence ID" value="ENSP00000355965.3"/>
    <property type="gene ID" value="ENSG00000117650.13"/>
</dbReference>
<dbReference type="Ensembl" id="ENST00000366999.9">
    <molecule id="P51955-1"/>
    <property type="protein sequence ID" value="ENSP00000355966.4"/>
    <property type="gene ID" value="ENSG00000117650.13"/>
</dbReference>
<dbReference type="GeneID" id="4751"/>
<dbReference type="KEGG" id="hsa:4751"/>
<dbReference type="MANE-Select" id="ENST00000366999.9">
    <property type="protein sequence ID" value="ENSP00000355966.4"/>
    <property type="RefSeq nucleotide sequence ID" value="NM_002497.4"/>
    <property type="RefSeq protein sequence ID" value="NP_002488.1"/>
</dbReference>
<dbReference type="UCSC" id="uc001hir.3">
    <molecule id="P51955-1"/>
    <property type="organism name" value="human"/>
</dbReference>
<dbReference type="AGR" id="HGNC:7745"/>
<dbReference type="CTD" id="4751"/>
<dbReference type="DisGeNET" id="4751"/>
<dbReference type="GeneCards" id="NEK2"/>
<dbReference type="HGNC" id="HGNC:7745">
    <property type="gene designation" value="NEK2"/>
</dbReference>
<dbReference type="HPA" id="ENSG00000117650">
    <property type="expression patterns" value="Group enriched (bone marrow, lymphoid tissue, testis)"/>
</dbReference>
<dbReference type="MalaCards" id="NEK2"/>
<dbReference type="MIM" id="604043">
    <property type="type" value="gene"/>
</dbReference>
<dbReference type="MIM" id="615565">
    <property type="type" value="phenotype"/>
</dbReference>
<dbReference type="neXtProt" id="NX_P51955"/>
<dbReference type="OpenTargets" id="ENSG00000117650"/>
<dbReference type="Orphanet" id="791">
    <property type="disease" value="Retinitis pigmentosa"/>
</dbReference>
<dbReference type="PharmGKB" id="PA31546"/>
<dbReference type="VEuPathDB" id="HostDB:ENSG00000117650"/>
<dbReference type="eggNOG" id="KOG1826">
    <property type="taxonomic scope" value="Eukaryota"/>
</dbReference>
<dbReference type="GeneTree" id="ENSGT00940000156989"/>
<dbReference type="HOGENOM" id="CLU_000288_63_23_1"/>
<dbReference type="InParanoid" id="P51955"/>
<dbReference type="OMA" id="LALHRCH"/>
<dbReference type="OrthoDB" id="248923at2759"/>
<dbReference type="PAN-GO" id="P51955">
    <property type="GO annotations" value="5 GO annotations based on evolutionary models"/>
</dbReference>
<dbReference type="PhylomeDB" id="P51955"/>
<dbReference type="TreeFam" id="TF101184"/>
<dbReference type="BRENDA" id="2.7.11.1">
    <property type="organism ID" value="2681"/>
</dbReference>
<dbReference type="PathwayCommons" id="P51955"/>
<dbReference type="Reactome" id="R-HSA-179409">
    <property type="pathway name" value="APC-Cdc20 mediated degradation of Nek2A"/>
</dbReference>
<dbReference type="Reactome" id="R-HSA-2565942">
    <property type="pathway name" value="Regulation of PLK1 Activity at G2/M Transition"/>
</dbReference>
<dbReference type="Reactome" id="R-HSA-380259">
    <property type="pathway name" value="Loss of Nlp from mitotic centrosomes"/>
</dbReference>
<dbReference type="Reactome" id="R-HSA-380270">
    <property type="pathway name" value="Recruitment of mitotic centrosome proteins and complexes"/>
</dbReference>
<dbReference type="Reactome" id="R-HSA-380284">
    <property type="pathway name" value="Loss of proteins required for interphase microtubule organization from the centrosome"/>
</dbReference>
<dbReference type="Reactome" id="R-HSA-380320">
    <property type="pathway name" value="Recruitment of NuMA to mitotic centrosomes"/>
</dbReference>
<dbReference type="Reactome" id="R-HSA-5620912">
    <property type="pathway name" value="Anchoring of the basal body to the plasma membrane"/>
</dbReference>
<dbReference type="Reactome" id="R-HSA-8854518">
    <property type="pathway name" value="AURKA Activation by TPX2"/>
</dbReference>
<dbReference type="SignaLink" id="P51955"/>
<dbReference type="SIGNOR" id="P51955"/>
<dbReference type="BioGRID-ORCS" id="4751">
    <property type="hits" value="58 hits in 1184 CRISPR screens"/>
</dbReference>
<dbReference type="CD-CODE" id="8C2F96ED">
    <property type="entry name" value="Centrosome"/>
</dbReference>
<dbReference type="CD-CODE" id="91857CE7">
    <property type="entry name" value="Nucleolus"/>
</dbReference>
<dbReference type="ChiTaRS" id="NEK2">
    <property type="organism name" value="human"/>
</dbReference>
<dbReference type="EvolutionaryTrace" id="P51955"/>
<dbReference type="GeneWiki" id="NEK2"/>
<dbReference type="GenomeRNAi" id="4751"/>
<dbReference type="Pharos" id="P51955">
    <property type="development level" value="Tchem"/>
</dbReference>
<dbReference type="PRO" id="PR:P51955"/>
<dbReference type="Proteomes" id="UP000005640">
    <property type="component" value="Chromosome 1"/>
</dbReference>
<dbReference type="RNAct" id="P51955">
    <property type="molecule type" value="protein"/>
</dbReference>
<dbReference type="Bgee" id="ENSG00000117650">
    <property type="expression patterns" value="Expressed in sperm and 146 other cell types or tissues"/>
</dbReference>
<dbReference type="ExpressionAtlas" id="P51955">
    <property type="expression patterns" value="baseline and differential"/>
</dbReference>
<dbReference type="GO" id="GO:0005813">
    <property type="term" value="C:centrosome"/>
    <property type="evidence" value="ECO:0000314"/>
    <property type="project" value="HPA"/>
</dbReference>
<dbReference type="GO" id="GO:0036064">
    <property type="term" value="C:ciliary basal body"/>
    <property type="evidence" value="ECO:0000314"/>
    <property type="project" value="HPA"/>
</dbReference>
<dbReference type="GO" id="GO:0005929">
    <property type="term" value="C:cilium"/>
    <property type="evidence" value="ECO:0000314"/>
    <property type="project" value="HPA"/>
</dbReference>
<dbReference type="GO" id="GO:0000794">
    <property type="term" value="C:condensed nuclear chromosome"/>
    <property type="evidence" value="ECO:0007669"/>
    <property type="project" value="Ensembl"/>
</dbReference>
<dbReference type="GO" id="GO:0005737">
    <property type="term" value="C:cytoplasm"/>
    <property type="evidence" value="ECO:0000318"/>
    <property type="project" value="GO_Central"/>
</dbReference>
<dbReference type="GO" id="GO:0005829">
    <property type="term" value="C:cytosol"/>
    <property type="evidence" value="ECO:0000304"/>
    <property type="project" value="Reactome"/>
</dbReference>
<dbReference type="GO" id="GO:0045171">
    <property type="term" value="C:intercellular bridge"/>
    <property type="evidence" value="ECO:0000314"/>
    <property type="project" value="HPA"/>
</dbReference>
<dbReference type="GO" id="GO:0000776">
    <property type="term" value="C:kinetochore"/>
    <property type="evidence" value="ECO:0000314"/>
    <property type="project" value="UniProtKB"/>
</dbReference>
<dbReference type="GO" id="GO:0005874">
    <property type="term" value="C:microtubule"/>
    <property type="evidence" value="ECO:0007669"/>
    <property type="project" value="UniProtKB-KW"/>
</dbReference>
<dbReference type="GO" id="GO:0030496">
    <property type="term" value="C:midbody"/>
    <property type="evidence" value="ECO:0007669"/>
    <property type="project" value="Ensembl"/>
</dbReference>
<dbReference type="GO" id="GO:0005730">
    <property type="term" value="C:nucleolus"/>
    <property type="evidence" value="ECO:0007669"/>
    <property type="project" value="UniProtKB-SubCell"/>
</dbReference>
<dbReference type="GO" id="GO:0005654">
    <property type="term" value="C:nucleoplasm"/>
    <property type="evidence" value="ECO:0000314"/>
    <property type="project" value="HPA"/>
</dbReference>
<dbReference type="GO" id="GO:0005634">
    <property type="term" value="C:nucleus"/>
    <property type="evidence" value="ECO:0000318"/>
    <property type="project" value="GO_Central"/>
</dbReference>
<dbReference type="GO" id="GO:0005886">
    <property type="term" value="C:plasma membrane"/>
    <property type="evidence" value="ECO:0000314"/>
    <property type="project" value="HPA"/>
</dbReference>
<dbReference type="GO" id="GO:0032991">
    <property type="term" value="C:protein-containing complex"/>
    <property type="evidence" value="ECO:0000315"/>
    <property type="project" value="UniProtKB"/>
</dbReference>
<dbReference type="GO" id="GO:0000922">
    <property type="term" value="C:spindle pole"/>
    <property type="evidence" value="ECO:0007669"/>
    <property type="project" value="UniProtKB-SubCell"/>
</dbReference>
<dbReference type="GO" id="GO:0005524">
    <property type="term" value="F:ATP binding"/>
    <property type="evidence" value="ECO:0007669"/>
    <property type="project" value="UniProtKB-KW"/>
</dbReference>
<dbReference type="GO" id="GO:0046872">
    <property type="term" value="F:metal ion binding"/>
    <property type="evidence" value="ECO:0007669"/>
    <property type="project" value="UniProtKB-KW"/>
</dbReference>
<dbReference type="GO" id="GO:0004672">
    <property type="term" value="F:protein kinase activity"/>
    <property type="evidence" value="ECO:0000314"/>
    <property type="project" value="UniProtKB"/>
</dbReference>
<dbReference type="GO" id="GO:0019903">
    <property type="term" value="F:protein phosphatase binding"/>
    <property type="evidence" value="ECO:0000353"/>
    <property type="project" value="UniProtKB"/>
</dbReference>
<dbReference type="GO" id="GO:0106310">
    <property type="term" value="F:protein serine kinase activity"/>
    <property type="evidence" value="ECO:0007669"/>
    <property type="project" value="RHEA"/>
</dbReference>
<dbReference type="GO" id="GO:0004674">
    <property type="term" value="F:protein serine/threonine kinase activity"/>
    <property type="evidence" value="ECO:0000318"/>
    <property type="project" value="GO_Central"/>
</dbReference>
<dbReference type="GO" id="GO:0001824">
    <property type="term" value="P:blastocyst development"/>
    <property type="evidence" value="ECO:0007669"/>
    <property type="project" value="Ensembl"/>
</dbReference>
<dbReference type="GO" id="GO:0051301">
    <property type="term" value="P:cell division"/>
    <property type="evidence" value="ECO:0007669"/>
    <property type="project" value="UniProtKB-KW"/>
</dbReference>
<dbReference type="GO" id="GO:0051299">
    <property type="term" value="P:centrosome separation"/>
    <property type="evidence" value="ECO:0000314"/>
    <property type="project" value="UniProtKB"/>
</dbReference>
<dbReference type="GO" id="GO:0007059">
    <property type="term" value="P:chromosome segregation"/>
    <property type="evidence" value="ECO:0000314"/>
    <property type="project" value="UniProtKB"/>
</dbReference>
<dbReference type="GO" id="GO:0051321">
    <property type="term" value="P:meiotic cell cycle"/>
    <property type="evidence" value="ECO:0007669"/>
    <property type="project" value="UniProtKB-KW"/>
</dbReference>
<dbReference type="GO" id="GO:0000278">
    <property type="term" value="P:mitotic cell cycle"/>
    <property type="evidence" value="ECO:0000304"/>
    <property type="project" value="ProtInc"/>
</dbReference>
<dbReference type="GO" id="GO:0090307">
    <property type="term" value="P:mitotic spindle assembly"/>
    <property type="evidence" value="ECO:0007669"/>
    <property type="project" value="Ensembl"/>
</dbReference>
<dbReference type="GO" id="GO:1903126">
    <property type="term" value="P:negative regulation of centriole-centriole cohesion"/>
    <property type="evidence" value="ECO:0000315"/>
    <property type="project" value="UniProtKB"/>
</dbReference>
<dbReference type="GO" id="GO:0032206">
    <property type="term" value="P:positive regulation of telomere maintenance"/>
    <property type="evidence" value="ECO:0000315"/>
    <property type="project" value="BHF-UCL"/>
</dbReference>
<dbReference type="GO" id="GO:0046777">
    <property type="term" value="P:protein autophosphorylation"/>
    <property type="evidence" value="ECO:0000314"/>
    <property type="project" value="UniProtKB"/>
</dbReference>
<dbReference type="GO" id="GO:0006468">
    <property type="term" value="P:protein phosphorylation"/>
    <property type="evidence" value="ECO:0000314"/>
    <property type="project" value="UniProtKB"/>
</dbReference>
<dbReference type="GO" id="GO:0051988">
    <property type="term" value="P:regulation of attachment of spindle microtubules to kinetochore"/>
    <property type="evidence" value="ECO:0000315"/>
    <property type="project" value="UniProtKB"/>
</dbReference>
<dbReference type="GO" id="GO:0046602">
    <property type="term" value="P:regulation of mitotic centrosome separation"/>
    <property type="evidence" value="ECO:0000315"/>
    <property type="project" value="UniProtKB"/>
</dbReference>
<dbReference type="GO" id="GO:0007088">
    <property type="term" value="P:regulation of mitotic nuclear division"/>
    <property type="evidence" value="ECO:0000304"/>
    <property type="project" value="ProtInc"/>
</dbReference>
<dbReference type="GO" id="GO:0051225">
    <property type="term" value="P:spindle assembly"/>
    <property type="evidence" value="ECO:0000304"/>
    <property type="project" value="UniProtKB"/>
</dbReference>
<dbReference type="CDD" id="cd08217">
    <property type="entry name" value="STKc_Nek2"/>
    <property type="match status" value="1"/>
</dbReference>
<dbReference type="FunFam" id="3.30.200.20:FF:000151">
    <property type="entry name" value="G2-specific protein kinase nimA"/>
    <property type="match status" value="1"/>
</dbReference>
<dbReference type="FunFam" id="1.10.510.10:FF:000356">
    <property type="entry name" value="Serine/threonine-protein kinase Nek2"/>
    <property type="match status" value="1"/>
</dbReference>
<dbReference type="FunFam" id="3.30.200.20:FF:000310">
    <property type="entry name" value="serine/threonine-protein kinase Nek2"/>
    <property type="match status" value="1"/>
</dbReference>
<dbReference type="Gene3D" id="3.30.200.20">
    <property type="entry name" value="Phosphorylase Kinase, domain 1"/>
    <property type="match status" value="2"/>
</dbReference>
<dbReference type="Gene3D" id="1.10.510.10">
    <property type="entry name" value="Transferase(Phosphotransferase) domain 1"/>
    <property type="match status" value="1"/>
</dbReference>
<dbReference type="InterPro" id="IPR011009">
    <property type="entry name" value="Kinase-like_dom_sf"/>
</dbReference>
<dbReference type="InterPro" id="IPR051131">
    <property type="entry name" value="NEK_Ser/Thr_kinase_NIMA"/>
</dbReference>
<dbReference type="InterPro" id="IPR000719">
    <property type="entry name" value="Prot_kinase_dom"/>
</dbReference>
<dbReference type="InterPro" id="IPR008271">
    <property type="entry name" value="Ser/Thr_kinase_AS"/>
</dbReference>
<dbReference type="PANTHER" id="PTHR44899">
    <property type="entry name" value="CAMK FAMILY PROTEIN KINASE"/>
    <property type="match status" value="1"/>
</dbReference>
<dbReference type="PANTHER" id="PTHR44899:SF10">
    <property type="entry name" value="NIMA-RELATED KINASE 2"/>
    <property type="match status" value="1"/>
</dbReference>
<dbReference type="Pfam" id="PF00069">
    <property type="entry name" value="Pkinase"/>
    <property type="match status" value="1"/>
</dbReference>
<dbReference type="SMART" id="SM00220">
    <property type="entry name" value="S_TKc"/>
    <property type="match status" value="1"/>
</dbReference>
<dbReference type="SUPFAM" id="SSF56112">
    <property type="entry name" value="Protein kinase-like (PK-like)"/>
    <property type="match status" value="1"/>
</dbReference>
<dbReference type="PROSITE" id="PS50011">
    <property type="entry name" value="PROTEIN_KINASE_DOM"/>
    <property type="match status" value="1"/>
</dbReference>
<dbReference type="PROSITE" id="PS00108">
    <property type="entry name" value="PROTEIN_KINASE_ST"/>
    <property type="match status" value="1"/>
</dbReference>